<accession>P63927</accession>
<accession>Q48ZA4</accession>
<accession>Q9A084</accession>
<comment type="function">
    <text evidence="1">Isomerase that catalyzes the conversion of deoxy-ribose 1-phosphate (dRib-1-P) and ribose 1-phosphate (Rib-1-P) to deoxy-ribose 5-phosphate (dRib-5-P) and ribose 5-phosphate (Rib-5-P), respectively.</text>
</comment>
<comment type="catalytic activity">
    <reaction evidence="1">
        <text>2-deoxy-alpha-D-ribose 1-phosphate = 2-deoxy-D-ribose 5-phosphate</text>
        <dbReference type="Rhea" id="RHEA:27658"/>
        <dbReference type="ChEBI" id="CHEBI:57259"/>
        <dbReference type="ChEBI" id="CHEBI:62877"/>
        <dbReference type="EC" id="5.4.2.7"/>
    </reaction>
</comment>
<comment type="catalytic activity">
    <reaction evidence="1">
        <text>alpha-D-ribose 1-phosphate = D-ribose 5-phosphate</text>
        <dbReference type="Rhea" id="RHEA:18793"/>
        <dbReference type="ChEBI" id="CHEBI:57720"/>
        <dbReference type="ChEBI" id="CHEBI:78346"/>
        <dbReference type="EC" id="5.4.2.7"/>
    </reaction>
</comment>
<comment type="cofactor">
    <cofactor evidence="1">
        <name>Mn(2+)</name>
        <dbReference type="ChEBI" id="CHEBI:29035"/>
    </cofactor>
    <text evidence="1">Binds 2 manganese ions.</text>
</comment>
<comment type="pathway">
    <text evidence="1">Carbohydrate degradation; 2-deoxy-D-ribose 1-phosphate degradation; D-glyceraldehyde 3-phosphate and acetaldehyde from 2-deoxy-alpha-D-ribose 1-phosphate: step 1/2.</text>
</comment>
<comment type="subcellular location">
    <subcellularLocation>
        <location evidence="1">Cytoplasm</location>
    </subcellularLocation>
</comment>
<comment type="similarity">
    <text evidence="1">Belongs to the phosphopentomutase family.</text>
</comment>
<proteinExistence type="inferred from homology"/>
<sequence>MSKFNRIHLVVLDSVGIGAAPDADKFFNAGVADTDSDTLGHISEAAGLSVPNMAKIGLGNISRPIPLKTVPTEDNPTGYVTKLEEVSLGKDTMTGHWEIMGLNITEPFDTFWNGFPEEILTKIEEFSGRKIIREANKPYSGTAVIDDFGPRQMETGELIVYTSADPVLQIAAHEDIIPVEELYKICEYARSITLERPALLGRIIARPYVGDPGNFTRTANRHDYAVSPFQDTVLNKLADAGVPTYAVGKINDIFNGSGITNDMGHNKSNSHGIDTLIKTLQLPEFTKGFSFTNLVDFDANFGHRRDPEGYRDCLHEFDNRLPEIIANMKEDDLLLITADHGNDPTYAGTDHTREYIPLLAYSVSFTGNGLIPQGHFADISATVAENFGVDTAMIGESFLSHLK</sequence>
<feature type="chain" id="PRO_0000199854" description="Phosphopentomutase">
    <location>
        <begin position="1"/>
        <end position="403"/>
    </location>
</feature>
<feature type="binding site" evidence="1">
    <location>
        <position position="13"/>
    </location>
    <ligand>
        <name>Mn(2+)</name>
        <dbReference type="ChEBI" id="CHEBI:29035"/>
        <label>1</label>
    </ligand>
</feature>
<feature type="binding site" evidence="1">
    <location>
        <position position="298"/>
    </location>
    <ligand>
        <name>Mn(2+)</name>
        <dbReference type="ChEBI" id="CHEBI:29035"/>
        <label>2</label>
    </ligand>
</feature>
<feature type="binding site" evidence="1">
    <location>
        <position position="303"/>
    </location>
    <ligand>
        <name>Mn(2+)</name>
        <dbReference type="ChEBI" id="CHEBI:29035"/>
        <label>2</label>
    </ligand>
</feature>
<feature type="binding site" evidence="1">
    <location>
        <position position="339"/>
    </location>
    <ligand>
        <name>Mn(2+)</name>
        <dbReference type="ChEBI" id="CHEBI:29035"/>
        <label>1</label>
    </ligand>
</feature>
<feature type="binding site" evidence="1">
    <location>
        <position position="340"/>
    </location>
    <ligand>
        <name>Mn(2+)</name>
        <dbReference type="ChEBI" id="CHEBI:29035"/>
        <label>1</label>
    </ligand>
</feature>
<feature type="binding site" evidence="1">
    <location>
        <position position="351"/>
    </location>
    <ligand>
        <name>Mn(2+)</name>
        <dbReference type="ChEBI" id="CHEBI:29035"/>
        <label>2</label>
    </ligand>
</feature>
<reference key="1">
    <citation type="journal article" date="2001" name="Proc. Natl. Acad. Sci. U.S.A.">
        <title>Complete genome sequence of an M1 strain of Streptococcus pyogenes.</title>
        <authorList>
            <person name="Ferretti J.J."/>
            <person name="McShan W.M."/>
            <person name="Ajdic D.J."/>
            <person name="Savic D.J."/>
            <person name="Savic G."/>
            <person name="Lyon K."/>
            <person name="Primeaux C."/>
            <person name="Sezate S."/>
            <person name="Suvorov A.N."/>
            <person name="Kenton S."/>
            <person name="Lai H.S."/>
            <person name="Lin S.P."/>
            <person name="Qian Y."/>
            <person name="Jia H.G."/>
            <person name="Najar F.Z."/>
            <person name="Ren Q."/>
            <person name="Zhu H."/>
            <person name="Song L."/>
            <person name="White J."/>
            <person name="Yuan X."/>
            <person name="Clifton S.W."/>
            <person name="Roe B.A."/>
            <person name="McLaughlin R.E."/>
        </authorList>
    </citation>
    <scope>NUCLEOTIDE SEQUENCE [LARGE SCALE GENOMIC DNA]</scope>
    <source>
        <strain>ATCC 700294 / SF370 / Serotype M1</strain>
    </source>
</reference>
<reference key="2">
    <citation type="journal article" date="2005" name="J. Infect. Dis.">
        <title>Evolutionary origin and emergence of a highly successful clone of serotype M1 group A Streptococcus involved multiple horizontal gene transfer events.</title>
        <authorList>
            <person name="Sumby P."/>
            <person name="Porcella S.F."/>
            <person name="Madrigal A.G."/>
            <person name="Barbian K.D."/>
            <person name="Virtaneva K."/>
            <person name="Ricklefs S.M."/>
            <person name="Sturdevant D.E."/>
            <person name="Graham M.R."/>
            <person name="Vuopio-Varkila J."/>
            <person name="Hoe N.P."/>
            <person name="Musser J.M."/>
        </authorList>
    </citation>
    <scope>NUCLEOTIDE SEQUENCE [LARGE SCALE GENOMIC DNA]</scope>
    <source>
        <strain>ATCC BAA-947 / MGAS5005 / Serotype M1</strain>
    </source>
</reference>
<evidence type="ECO:0000255" key="1">
    <source>
        <dbReference type="HAMAP-Rule" id="MF_00740"/>
    </source>
</evidence>
<gene>
    <name evidence="1" type="primary">deoB</name>
    <name type="ordered locus">SPy_0890</name>
    <name type="ordered locus">M5005_Spy0696</name>
</gene>
<keyword id="KW-0963">Cytoplasm</keyword>
<keyword id="KW-0413">Isomerase</keyword>
<keyword id="KW-0464">Manganese</keyword>
<keyword id="KW-0479">Metal-binding</keyword>
<keyword id="KW-1185">Reference proteome</keyword>
<dbReference type="EC" id="5.4.2.7" evidence="1"/>
<dbReference type="EMBL" id="AE004092">
    <property type="protein sequence ID" value="AAK33810.1"/>
    <property type="molecule type" value="Genomic_DNA"/>
</dbReference>
<dbReference type="EMBL" id="CP000017">
    <property type="protein sequence ID" value="AAZ51314.1"/>
    <property type="molecule type" value="Genomic_DNA"/>
</dbReference>
<dbReference type="RefSeq" id="NP_269089.1">
    <property type="nucleotide sequence ID" value="NC_002737.2"/>
</dbReference>
<dbReference type="SMR" id="P63927"/>
<dbReference type="PaxDb" id="1314-HKU360_00705"/>
<dbReference type="KEGG" id="spy:SPy_0890"/>
<dbReference type="KEGG" id="spz:M5005_Spy0696"/>
<dbReference type="PATRIC" id="fig|160490.10.peg.766"/>
<dbReference type="HOGENOM" id="CLU_053861_0_0_9"/>
<dbReference type="OMA" id="SGHWEMM"/>
<dbReference type="UniPathway" id="UPA00002">
    <property type="reaction ID" value="UER00467"/>
</dbReference>
<dbReference type="Proteomes" id="UP000000750">
    <property type="component" value="Chromosome"/>
</dbReference>
<dbReference type="GO" id="GO:0005829">
    <property type="term" value="C:cytosol"/>
    <property type="evidence" value="ECO:0007669"/>
    <property type="project" value="TreeGrafter"/>
</dbReference>
<dbReference type="GO" id="GO:0000287">
    <property type="term" value="F:magnesium ion binding"/>
    <property type="evidence" value="ECO:0007669"/>
    <property type="project" value="InterPro"/>
</dbReference>
<dbReference type="GO" id="GO:0030145">
    <property type="term" value="F:manganese ion binding"/>
    <property type="evidence" value="ECO:0007669"/>
    <property type="project" value="UniProtKB-UniRule"/>
</dbReference>
<dbReference type="GO" id="GO:0008973">
    <property type="term" value="F:phosphopentomutase activity"/>
    <property type="evidence" value="ECO:0007669"/>
    <property type="project" value="UniProtKB-UniRule"/>
</dbReference>
<dbReference type="GO" id="GO:0006018">
    <property type="term" value="P:2-deoxyribose 1-phosphate catabolic process"/>
    <property type="evidence" value="ECO:0007669"/>
    <property type="project" value="UniProtKB-UniRule"/>
</dbReference>
<dbReference type="GO" id="GO:0006015">
    <property type="term" value="P:5-phosphoribose 1-diphosphate biosynthetic process"/>
    <property type="evidence" value="ECO:0007669"/>
    <property type="project" value="UniProtKB-UniPathway"/>
</dbReference>
<dbReference type="GO" id="GO:0043094">
    <property type="term" value="P:metabolic compound salvage"/>
    <property type="evidence" value="ECO:0007669"/>
    <property type="project" value="InterPro"/>
</dbReference>
<dbReference type="GO" id="GO:0009117">
    <property type="term" value="P:nucleotide metabolic process"/>
    <property type="evidence" value="ECO:0007669"/>
    <property type="project" value="InterPro"/>
</dbReference>
<dbReference type="CDD" id="cd16009">
    <property type="entry name" value="PPM"/>
    <property type="match status" value="1"/>
</dbReference>
<dbReference type="FunFam" id="3.30.70.1250:FF:000001">
    <property type="entry name" value="Phosphopentomutase"/>
    <property type="match status" value="1"/>
</dbReference>
<dbReference type="Gene3D" id="3.40.720.10">
    <property type="entry name" value="Alkaline Phosphatase, subunit A"/>
    <property type="match status" value="1"/>
</dbReference>
<dbReference type="Gene3D" id="3.30.70.1250">
    <property type="entry name" value="Phosphopentomutase"/>
    <property type="match status" value="1"/>
</dbReference>
<dbReference type="HAMAP" id="MF_00740">
    <property type="entry name" value="Phosphopentomut"/>
    <property type="match status" value="1"/>
</dbReference>
<dbReference type="InterPro" id="IPR017850">
    <property type="entry name" value="Alkaline_phosphatase_core_sf"/>
</dbReference>
<dbReference type="InterPro" id="IPR010045">
    <property type="entry name" value="DeoB"/>
</dbReference>
<dbReference type="InterPro" id="IPR006124">
    <property type="entry name" value="Metalloenzyme"/>
</dbReference>
<dbReference type="InterPro" id="IPR024052">
    <property type="entry name" value="Phosphopentomutase_DeoB_cap_sf"/>
</dbReference>
<dbReference type="NCBIfam" id="TIGR01696">
    <property type="entry name" value="deoB"/>
    <property type="match status" value="1"/>
</dbReference>
<dbReference type="NCBIfam" id="NF003766">
    <property type="entry name" value="PRK05362.1"/>
    <property type="match status" value="1"/>
</dbReference>
<dbReference type="PANTHER" id="PTHR21110">
    <property type="entry name" value="PHOSPHOPENTOMUTASE"/>
    <property type="match status" value="1"/>
</dbReference>
<dbReference type="PANTHER" id="PTHR21110:SF0">
    <property type="entry name" value="PHOSPHOPENTOMUTASE"/>
    <property type="match status" value="1"/>
</dbReference>
<dbReference type="Pfam" id="PF01676">
    <property type="entry name" value="Metalloenzyme"/>
    <property type="match status" value="1"/>
</dbReference>
<dbReference type="PIRSF" id="PIRSF001491">
    <property type="entry name" value="Ppentomutase"/>
    <property type="match status" value="1"/>
</dbReference>
<dbReference type="SUPFAM" id="SSF53649">
    <property type="entry name" value="Alkaline phosphatase-like"/>
    <property type="match status" value="1"/>
</dbReference>
<dbReference type="SUPFAM" id="SSF143856">
    <property type="entry name" value="DeoB insert domain-like"/>
    <property type="match status" value="1"/>
</dbReference>
<name>DEOB_STRP1</name>
<organism>
    <name type="scientific">Streptococcus pyogenes serotype M1</name>
    <dbReference type="NCBI Taxonomy" id="301447"/>
    <lineage>
        <taxon>Bacteria</taxon>
        <taxon>Bacillati</taxon>
        <taxon>Bacillota</taxon>
        <taxon>Bacilli</taxon>
        <taxon>Lactobacillales</taxon>
        <taxon>Streptococcaceae</taxon>
        <taxon>Streptococcus</taxon>
    </lineage>
</organism>
<protein>
    <recommendedName>
        <fullName evidence="1">Phosphopentomutase</fullName>
        <ecNumber evidence="1">5.4.2.7</ecNumber>
    </recommendedName>
    <alternativeName>
        <fullName evidence="1">Phosphodeoxyribomutase</fullName>
    </alternativeName>
</protein>